<keyword id="KW-0963">Cytoplasm</keyword>
<keyword id="KW-0312">Gluconeogenesis</keyword>
<keyword id="KW-0324">Glycolysis</keyword>
<keyword id="KW-0413">Isomerase</keyword>
<gene>
    <name evidence="1" type="primary">tpiA</name>
    <name type="synonym">tpi</name>
    <name type="ordered locus">SAS0740</name>
</gene>
<name>TPIS_STAAS</name>
<dbReference type="EC" id="5.3.1.1" evidence="1"/>
<dbReference type="EMBL" id="BX571857">
    <property type="protein sequence ID" value="CAG42515.1"/>
    <property type="molecule type" value="Genomic_DNA"/>
</dbReference>
<dbReference type="RefSeq" id="WP_001260089.1">
    <property type="nucleotide sequence ID" value="NC_002953.3"/>
</dbReference>
<dbReference type="SMR" id="Q6GB56"/>
<dbReference type="KEGG" id="sas:SAS0740"/>
<dbReference type="HOGENOM" id="CLU_024251_2_3_9"/>
<dbReference type="UniPathway" id="UPA00109">
    <property type="reaction ID" value="UER00189"/>
</dbReference>
<dbReference type="UniPathway" id="UPA00138"/>
<dbReference type="GO" id="GO:0005829">
    <property type="term" value="C:cytosol"/>
    <property type="evidence" value="ECO:0007669"/>
    <property type="project" value="TreeGrafter"/>
</dbReference>
<dbReference type="GO" id="GO:0004807">
    <property type="term" value="F:triose-phosphate isomerase activity"/>
    <property type="evidence" value="ECO:0007669"/>
    <property type="project" value="UniProtKB-UniRule"/>
</dbReference>
<dbReference type="GO" id="GO:0006094">
    <property type="term" value="P:gluconeogenesis"/>
    <property type="evidence" value="ECO:0007669"/>
    <property type="project" value="UniProtKB-UniRule"/>
</dbReference>
<dbReference type="GO" id="GO:0046166">
    <property type="term" value="P:glyceraldehyde-3-phosphate biosynthetic process"/>
    <property type="evidence" value="ECO:0007669"/>
    <property type="project" value="TreeGrafter"/>
</dbReference>
<dbReference type="GO" id="GO:0019563">
    <property type="term" value="P:glycerol catabolic process"/>
    <property type="evidence" value="ECO:0007669"/>
    <property type="project" value="TreeGrafter"/>
</dbReference>
<dbReference type="GO" id="GO:0006096">
    <property type="term" value="P:glycolytic process"/>
    <property type="evidence" value="ECO:0007669"/>
    <property type="project" value="UniProtKB-UniRule"/>
</dbReference>
<dbReference type="CDD" id="cd00311">
    <property type="entry name" value="TIM"/>
    <property type="match status" value="1"/>
</dbReference>
<dbReference type="FunFam" id="3.20.20.70:FF:000016">
    <property type="entry name" value="Triosephosphate isomerase"/>
    <property type="match status" value="1"/>
</dbReference>
<dbReference type="Gene3D" id="3.20.20.70">
    <property type="entry name" value="Aldolase class I"/>
    <property type="match status" value="1"/>
</dbReference>
<dbReference type="HAMAP" id="MF_00147_B">
    <property type="entry name" value="TIM_B"/>
    <property type="match status" value="1"/>
</dbReference>
<dbReference type="InterPro" id="IPR013785">
    <property type="entry name" value="Aldolase_TIM"/>
</dbReference>
<dbReference type="InterPro" id="IPR035990">
    <property type="entry name" value="TIM_sf"/>
</dbReference>
<dbReference type="InterPro" id="IPR022896">
    <property type="entry name" value="TrioseP_Isoase_bac/euk"/>
</dbReference>
<dbReference type="InterPro" id="IPR000652">
    <property type="entry name" value="Triosephosphate_isomerase"/>
</dbReference>
<dbReference type="InterPro" id="IPR020861">
    <property type="entry name" value="Triosephosphate_isomerase_AS"/>
</dbReference>
<dbReference type="NCBIfam" id="TIGR00419">
    <property type="entry name" value="tim"/>
    <property type="match status" value="1"/>
</dbReference>
<dbReference type="PANTHER" id="PTHR21139">
    <property type="entry name" value="TRIOSEPHOSPHATE ISOMERASE"/>
    <property type="match status" value="1"/>
</dbReference>
<dbReference type="PANTHER" id="PTHR21139:SF42">
    <property type="entry name" value="TRIOSEPHOSPHATE ISOMERASE"/>
    <property type="match status" value="1"/>
</dbReference>
<dbReference type="Pfam" id="PF00121">
    <property type="entry name" value="TIM"/>
    <property type="match status" value="1"/>
</dbReference>
<dbReference type="SUPFAM" id="SSF51351">
    <property type="entry name" value="Triosephosphate isomerase (TIM)"/>
    <property type="match status" value="1"/>
</dbReference>
<dbReference type="PROSITE" id="PS00171">
    <property type="entry name" value="TIM_1"/>
    <property type="match status" value="1"/>
</dbReference>
<dbReference type="PROSITE" id="PS51440">
    <property type="entry name" value="TIM_2"/>
    <property type="match status" value="1"/>
</dbReference>
<evidence type="ECO:0000255" key="1">
    <source>
        <dbReference type="HAMAP-Rule" id="MF_00147"/>
    </source>
</evidence>
<comment type="function">
    <text evidence="1">Involved in the gluconeogenesis. Catalyzes stereospecifically the conversion of dihydroxyacetone phosphate (DHAP) to D-glyceraldehyde-3-phosphate (G3P).</text>
</comment>
<comment type="catalytic activity">
    <reaction evidence="1">
        <text>D-glyceraldehyde 3-phosphate = dihydroxyacetone phosphate</text>
        <dbReference type="Rhea" id="RHEA:18585"/>
        <dbReference type="ChEBI" id="CHEBI:57642"/>
        <dbReference type="ChEBI" id="CHEBI:59776"/>
        <dbReference type="EC" id="5.3.1.1"/>
    </reaction>
</comment>
<comment type="pathway">
    <text evidence="1">Carbohydrate biosynthesis; gluconeogenesis.</text>
</comment>
<comment type="pathway">
    <text evidence="1">Carbohydrate degradation; glycolysis; D-glyceraldehyde 3-phosphate from glycerone phosphate: step 1/1.</text>
</comment>
<comment type="subunit">
    <text evidence="1">Homodimer.</text>
</comment>
<comment type="subcellular location">
    <subcellularLocation>
        <location evidence="1">Cytoplasm</location>
    </subcellularLocation>
</comment>
<comment type="similarity">
    <text evidence="1">Belongs to the triosephosphate isomerase family.</text>
</comment>
<reference key="1">
    <citation type="journal article" date="2004" name="Proc. Natl. Acad. Sci. U.S.A.">
        <title>Complete genomes of two clinical Staphylococcus aureus strains: evidence for the rapid evolution of virulence and drug resistance.</title>
        <authorList>
            <person name="Holden M.T.G."/>
            <person name="Feil E.J."/>
            <person name="Lindsay J.A."/>
            <person name="Peacock S.J."/>
            <person name="Day N.P.J."/>
            <person name="Enright M.C."/>
            <person name="Foster T.J."/>
            <person name="Moore C.E."/>
            <person name="Hurst L."/>
            <person name="Atkin R."/>
            <person name="Barron A."/>
            <person name="Bason N."/>
            <person name="Bentley S.D."/>
            <person name="Chillingworth C."/>
            <person name="Chillingworth T."/>
            <person name="Churcher C."/>
            <person name="Clark L."/>
            <person name="Corton C."/>
            <person name="Cronin A."/>
            <person name="Doggett J."/>
            <person name="Dowd L."/>
            <person name="Feltwell T."/>
            <person name="Hance Z."/>
            <person name="Harris B."/>
            <person name="Hauser H."/>
            <person name="Holroyd S."/>
            <person name="Jagels K."/>
            <person name="James K.D."/>
            <person name="Lennard N."/>
            <person name="Line A."/>
            <person name="Mayes R."/>
            <person name="Moule S."/>
            <person name="Mungall K."/>
            <person name="Ormond D."/>
            <person name="Quail M.A."/>
            <person name="Rabbinowitsch E."/>
            <person name="Rutherford K.M."/>
            <person name="Sanders M."/>
            <person name="Sharp S."/>
            <person name="Simmonds M."/>
            <person name="Stevens K."/>
            <person name="Whitehead S."/>
            <person name="Barrell B.G."/>
            <person name="Spratt B.G."/>
            <person name="Parkhill J."/>
        </authorList>
    </citation>
    <scope>NUCLEOTIDE SEQUENCE [LARGE SCALE GENOMIC DNA]</scope>
    <source>
        <strain>MSSA476</strain>
    </source>
</reference>
<organism>
    <name type="scientific">Staphylococcus aureus (strain MSSA476)</name>
    <dbReference type="NCBI Taxonomy" id="282459"/>
    <lineage>
        <taxon>Bacteria</taxon>
        <taxon>Bacillati</taxon>
        <taxon>Bacillota</taxon>
        <taxon>Bacilli</taxon>
        <taxon>Bacillales</taxon>
        <taxon>Staphylococcaceae</taxon>
        <taxon>Staphylococcus</taxon>
    </lineage>
</organism>
<proteinExistence type="inferred from homology"/>
<protein>
    <recommendedName>
        <fullName evidence="1">Triosephosphate isomerase</fullName>
        <shortName evidence="1">TIM</shortName>
        <shortName evidence="1">TPI</shortName>
        <ecNumber evidence="1">5.3.1.1</ecNumber>
    </recommendedName>
    <alternativeName>
        <fullName evidence="1">Triose-phosphate isomerase</fullName>
    </alternativeName>
</protein>
<accession>Q6GB56</accession>
<sequence>MRTPIIAGNWKMNKTVQEAKDFVNALPTLPDSKEVESVICAPAIQLDALTTAVKEGKAQGLEIGAQNTYFEDNGAFTGETSPVALADLGVKYVVIGHSERRELFHETDEEINKKAHAIFKHGMTPIICVGETDEERESGKANDVVGEQVKKAVAGLSEDQLKSVVIAYEPIWAIGTGKSSTSEDANEMCAFVRQTIADLSSKEVSEATRIQYGGSVKPNNIKEYMAQTDIDGALVGGASLKVEDFVQLLEGAK</sequence>
<feature type="chain" id="PRO_0000090287" description="Triosephosphate isomerase">
    <location>
        <begin position="1"/>
        <end position="253"/>
    </location>
</feature>
<feature type="active site" description="Electrophile" evidence="1">
    <location>
        <position position="97"/>
    </location>
</feature>
<feature type="active site" description="Proton acceptor" evidence="1">
    <location>
        <position position="169"/>
    </location>
</feature>
<feature type="binding site" evidence="1">
    <location>
        <begin position="9"/>
        <end position="11"/>
    </location>
    <ligand>
        <name>substrate</name>
    </ligand>
</feature>
<feature type="binding site" evidence="1">
    <location>
        <position position="175"/>
    </location>
    <ligand>
        <name>substrate</name>
    </ligand>
</feature>
<feature type="binding site" evidence="1">
    <location>
        <position position="215"/>
    </location>
    <ligand>
        <name>substrate</name>
    </ligand>
</feature>
<feature type="binding site" evidence="1">
    <location>
        <begin position="236"/>
        <end position="237"/>
    </location>
    <ligand>
        <name>substrate</name>
    </ligand>
</feature>